<name>RBSD_HAEIN</name>
<accession>P44734</accession>
<keyword id="KW-0119">Carbohydrate metabolism</keyword>
<keyword id="KW-0963">Cytoplasm</keyword>
<keyword id="KW-0413">Isomerase</keyword>
<keyword id="KW-1185">Reference proteome</keyword>
<sequence>MKKTALLNAQLSHCIATLGHTESLTICDAGLPIPLSVERIDLALTAGVPSFLQTLNVVTNEMYVERVVIAEEIKEKNPEILTALLTQLQKLESHQGNQIQVEFVSHETFKKFTLESKAIVRTGECSPYANVILYSGVPF</sequence>
<organism>
    <name type="scientific">Haemophilus influenzae (strain ATCC 51907 / DSM 11121 / KW20 / Rd)</name>
    <dbReference type="NCBI Taxonomy" id="71421"/>
    <lineage>
        <taxon>Bacteria</taxon>
        <taxon>Pseudomonadati</taxon>
        <taxon>Pseudomonadota</taxon>
        <taxon>Gammaproteobacteria</taxon>
        <taxon>Pasteurellales</taxon>
        <taxon>Pasteurellaceae</taxon>
        <taxon>Haemophilus</taxon>
    </lineage>
</organism>
<dbReference type="EC" id="5.4.99.62"/>
<dbReference type="EMBL" id="L42023">
    <property type="protein sequence ID" value="AAC22159.1"/>
    <property type="molecule type" value="Genomic_DNA"/>
</dbReference>
<dbReference type="PIR" id="G64072">
    <property type="entry name" value="G64072"/>
</dbReference>
<dbReference type="RefSeq" id="NP_438659.1">
    <property type="nucleotide sequence ID" value="NC_000907.1"/>
</dbReference>
<dbReference type="SMR" id="P44734"/>
<dbReference type="STRING" id="71421.HI_0501"/>
<dbReference type="DNASU" id="949497"/>
<dbReference type="EnsemblBacteria" id="AAC22159">
    <property type="protein sequence ID" value="AAC22159"/>
    <property type="gene ID" value="HI_0501"/>
</dbReference>
<dbReference type="KEGG" id="hin:HI_0501"/>
<dbReference type="PATRIC" id="fig|71421.8.peg.520"/>
<dbReference type="eggNOG" id="COG1869">
    <property type="taxonomic scope" value="Bacteria"/>
</dbReference>
<dbReference type="HOGENOM" id="CLU_135498_0_0_6"/>
<dbReference type="OrthoDB" id="9805009at2"/>
<dbReference type="PhylomeDB" id="P44734"/>
<dbReference type="BioCyc" id="HINF71421:G1GJ1-514-MONOMER"/>
<dbReference type="UniPathway" id="UPA00916">
    <property type="reaction ID" value="UER00888"/>
</dbReference>
<dbReference type="Proteomes" id="UP000000579">
    <property type="component" value="Chromosome"/>
</dbReference>
<dbReference type="GO" id="GO:0005829">
    <property type="term" value="C:cytosol"/>
    <property type="evidence" value="ECO:0000318"/>
    <property type="project" value="GO_Central"/>
</dbReference>
<dbReference type="GO" id="GO:0062193">
    <property type="term" value="F:D-ribose pyranase activity"/>
    <property type="evidence" value="ECO:0007669"/>
    <property type="project" value="UniProtKB-EC"/>
</dbReference>
<dbReference type="GO" id="GO:0016872">
    <property type="term" value="F:intramolecular lyase activity"/>
    <property type="evidence" value="ECO:0007669"/>
    <property type="project" value="UniProtKB-UniRule"/>
</dbReference>
<dbReference type="GO" id="GO:0016866">
    <property type="term" value="F:intramolecular transferase activity"/>
    <property type="evidence" value="ECO:0000318"/>
    <property type="project" value="GO_Central"/>
</dbReference>
<dbReference type="GO" id="GO:0048029">
    <property type="term" value="F:monosaccharide binding"/>
    <property type="evidence" value="ECO:0007669"/>
    <property type="project" value="InterPro"/>
</dbReference>
<dbReference type="GO" id="GO:0019303">
    <property type="term" value="P:D-ribose catabolic process"/>
    <property type="evidence" value="ECO:0000318"/>
    <property type="project" value="GO_Central"/>
</dbReference>
<dbReference type="FunFam" id="3.40.1650.10:FF:000002">
    <property type="entry name" value="D-ribose pyranase"/>
    <property type="match status" value="1"/>
</dbReference>
<dbReference type="Gene3D" id="3.40.1650.10">
    <property type="entry name" value="RbsD-like domain"/>
    <property type="match status" value="1"/>
</dbReference>
<dbReference type="HAMAP" id="MF_01661">
    <property type="entry name" value="D_rib_pyranase"/>
    <property type="match status" value="1"/>
</dbReference>
<dbReference type="InterPro" id="IPR023064">
    <property type="entry name" value="D-ribose_pyranase"/>
</dbReference>
<dbReference type="InterPro" id="IPR023750">
    <property type="entry name" value="RbsD-like_sf"/>
</dbReference>
<dbReference type="InterPro" id="IPR007721">
    <property type="entry name" value="RbsD_FucU"/>
</dbReference>
<dbReference type="NCBIfam" id="NF008761">
    <property type="entry name" value="PRK11797.1"/>
    <property type="match status" value="1"/>
</dbReference>
<dbReference type="PANTHER" id="PTHR37831">
    <property type="entry name" value="D-RIBOSE PYRANASE"/>
    <property type="match status" value="1"/>
</dbReference>
<dbReference type="PANTHER" id="PTHR37831:SF1">
    <property type="entry name" value="D-RIBOSE PYRANASE"/>
    <property type="match status" value="1"/>
</dbReference>
<dbReference type="Pfam" id="PF05025">
    <property type="entry name" value="RbsD_FucU"/>
    <property type="match status" value="1"/>
</dbReference>
<dbReference type="SUPFAM" id="SSF102546">
    <property type="entry name" value="RbsD-like"/>
    <property type="match status" value="1"/>
</dbReference>
<proteinExistence type="inferred from homology"/>
<reference key="1">
    <citation type="journal article" date="1995" name="Science">
        <title>Whole-genome random sequencing and assembly of Haemophilus influenzae Rd.</title>
        <authorList>
            <person name="Fleischmann R.D."/>
            <person name="Adams M.D."/>
            <person name="White O."/>
            <person name="Clayton R.A."/>
            <person name="Kirkness E.F."/>
            <person name="Kerlavage A.R."/>
            <person name="Bult C.J."/>
            <person name="Tomb J.-F."/>
            <person name="Dougherty B.A."/>
            <person name="Merrick J.M."/>
            <person name="McKenney K."/>
            <person name="Sutton G.G."/>
            <person name="FitzHugh W."/>
            <person name="Fields C.A."/>
            <person name="Gocayne J.D."/>
            <person name="Scott J.D."/>
            <person name="Shirley R."/>
            <person name="Liu L.-I."/>
            <person name="Glodek A."/>
            <person name="Kelley J.M."/>
            <person name="Weidman J.F."/>
            <person name="Phillips C.A."/>
            <person name="Spriggs T."/>
            <person name="Hedblom E."/>
            <person name="Cotton M.D."/>
            <person name="Utterback T.R."/>
            <person name="Hanna M.C."/>
            <person name="Nguyen D.T."/>
            <person name="Saudek D.M."/>
            <person name="Brandon R.C."/>
            <person name="Fine L.D."/>
            <person name="Fritchman J.L."/>
            <person name="Fuhrmann J.L."/>
            <person name="Geoghagen N.S.M."/>
            <person name="Gnehm C.L."/>
            <person name="McDonald L.A."/>
            <person name="Small K.V."/>
            <person name="Fraser C.M."/>
            <person name="Smith H.O."/>
            <person name="Venter J.C."/>
        </authorList>
    </citation>
    <scope>NUCLEOTIDE SEQUENCE [LARGE SCALE GENOMIC DNA]</scope>
    <source>
        <strain>ATCC 51907 / DSM 11121 / KW20 / Rd</strain>
    </source>
</reference>
<feature type="chain" id="PRO_0000097193" description="D-ribose pyranase">
    <location>
        <begin position="1"/>
        <end position="139"/>
    </location>
</feature>
<feature type="active site" description="Proton donor" evidence="1">
    <location>
        <position position="20"/>
    </location>
</feature>
<feature type="binding site" evidence="1">
    <location>
        <position position="28"/>
    </location>
    <ligand>
        <name>substrate</name>
    </ligand>
</feature>
<feature type="binding site" evidence="1">
    <location>
        <position position="106"/>
    </location>
    <ligand>
        <name>substrate</name>
    </ligand>
</feature>
<feature type="binding site" evidence="1">
    <location>
        <begin position="128"/>
        <end position="130"/>
    </location>
    <ligand>
        <name>substrate</name>
    </ligand>
</feature>
<protein>
    <recommendedName>
        <fullName>D-ribose pyranase</fullName>
        <ecNumber>5.4.99.62</ecNumber>
    </recommendedName>
</protein>
<comment type="function">
    <text evidence="1">Catalyzes the interconversion of beta-pyran and beta-furan forms of D-ribose.</text>
</comment>
<comment type="catalytic activity">
    <reaction>
        <text>beta-D-ribopyranose = beta-D-ribofuranose</text>
        <dbReference type="Rhea" id="RHEA:25432"/>
        <dbReference type="ChEBI" id="CHEBI:27476"/>
        <dbReference type="ChEBI" id="CHEBI:47002"/>
        <dbReference type="EC" id="5.4.99.62"/>
    </reaction>
</comment>
<comment type="pathway">
    <text>Carbohydrate metabolism; D-ribose degradation; D-ribose 5-phosphate from beta-D-ribopyranose: step 1/2.</text>
</comment>
<comment type="subunit">
    <text evidence="1">Homodecamer.</text>
</comment>
<comment type="subcellular location">
    <subcellularLocation>
        <location evidence="2">Cytoplasm</location>
    </subcellularLocation>
</comment>
<comment type="similarity">
    <text evidence="2">Belongs to the RbsD / FucU family. RbsD subfamily.</text>
</comment>
<gene>
    <name type="primary">rbsD</name>
    <name type="ordered locus">HI_0501</name>
</gene>
<evidence type="ECO:0000250" key="1"/>
<evidence type="ECO:0000305" key="2"/>